<feature type="initiator methionine" description="Removed" evidence="32">
    <location>
        <position position="1"/>
    </location>
</feature>
<feature type="chain" id="PRO_0000219042" description="Derlin-1">
    <location>
        <begin position="2"/>
        <end position="251"/>
    </location>
</feature>
<feature type="topological domain" description="Cytoplasmic" evidence="22">
    <location>
        <begin position="2"/>
        <end position="15"/>
    </location>
</feature>
<feature type="transmembrane region" description="Helical; Name=1" evidence="22">
    <location>
        <begin position="16"/>
        <end position="31"/>
    </location>
</feature>
<feature type="topological domain" description="Lumenal" evidence="22">
    <location>
        <begin position="32"/>
        <end position="69"/>
    </location>
</feature>
<feature type="transmembrane region" description="Helical; Name=2" evidence="22">
    <location>
        <begin position="70"/>
        <end position="89"/>
    </location>
</feature>
<feature type="topological domain" description="Cytoplasmic" evidence="22">
    <location>
        <begin position="90"/>
        <end position="94"/>
    </location>
</feature>
<feature type="transmembrane region" description="Helical; Name=3" evidence="22">
    <location>
        <begin position="95"/>
        <end position="115"/>
    </location>
</feature>
<feature type="topological domain" description="Lumenal" evidence="22">
    <location>
        <begin position="116"/>
        <end position="122"/>
    </location>
</feature>
<feature type="transmembrane region" description="Helical; Name=4" evidence="22">
    <location>
        <begin position="123"/>
        <end position="137"/>
    </location>
</feature>
<feature type="topological domain" description="Cytoplasmic" evidence="22">
    <location>
        <begin position="138"/>
        <end position="154"/>
    </location>
</feature>
<feature type="transmembrane region" description="Helical; Name=5" evidence="22">
    <location>
        <begin position="155"/>
        <end position="166"/>
    </location>
</feature>
<feature type="topological domain" description="Lumenal" evidence="22">
    <location>
        <begin position="167"/>
        <end position="170"/>
    </location>
</feature>
<feature type="transmembrane region" description="Helical; Name=6" evidence="22">
    <location>
        <begin position="171"/>
        <end position="189"/>
    </location>
</feature>
<feature type="topological domain" description="Cytoplasmic" evidence="22">
    <location>
        <begin position="190"/>
        <end position="251"/>
    </location>
</feature>
<feature type="region of interest" description="Disordered" evidence="2">
    <location>
        <begin position="229"/>
        <end position="251"/>
    </location>
</feature>
<feature type="short sequence motif" description="SHP-box" evidence="26">
    <location>
        <begin position="241"/>
        <end position="248"/>
    </location>
</feature>
<feature type="modified residue" description="N-acetylserine" evidence="32">
    <location>
        <position position="2"/>
    </location>
</feature>
<feature type="modified residue" description="Phosphoserine" evidence="33">
    <location>
        <position position="201"/>
    </location>
</feature>
<feature type="modified residue" description="Phosphothreonine" evidence="31">
    <location>
        <position position="202"/>
    </location>
</feature>
<feature type="modified residue" description="Phosphoserine" evidence="33">
    <location>
        <position position="226"/>
    </location>
</feature>
<feature type="splice variant" id="VSP_041329" description="In isoform 2." evidence="23">
    <location>
        <begin position="170"/>
        <end position="189"/>
    </location>
</feature>
<feature type="sequence variant" id="VAR_019516" description="In dbSNP:rs2272722.">
    <original>I</original>
    <variation>V</variation>
    <location>
        <position position="171"/>
    </location>
</feature>
<feature type="mutagenesis site" description="Impaired ERAD substrate degradation." evidence="22">
    <original>F</original>
    <variation>C</variation>
    <location>
        <position position="70"/>
    </location>
</feature>
<feature type="mutagenesis site" description="Impaired ERAD substrate degradation." evidence="22">
    <original>L</original>
    <variation>A</variation>
    <location>
        <position position="73"/>
    </location>
</feature>
<feature type="mutagenesis site" description="Impaired ERAD substrate degradation." evidence="22">
    <original>Y</original>
    <variation>A</variation>
    <location>
        <position position="164"/>
    </location>
</feature>
<feature type="mutagenesis site" description="Impaired ERAD substrate degradation." evidence="22">
    <original>I</original>
    <variation>A</variation>
    <location>
        <position position="165"/>
    </location>
</feature>
<feature type="mutagenesis site" description="Reduces interaction with and proteolysis of XBP1 isoform 1." evidence="17">
    <original>G</original>
    <variation>V</variation>
    <location>
        <position position="180"/>
    </location>
</feature>
<feature type="mutagenesis site" description="Significantly reduced binding to VCP." evidence="20">
    <original>GQG</original>
    <variation>AQA</variation>
    <location>
        <begin position="243"/>
        <end position="245"/>
    </location>
</feature>
<feature type="mutagenesis site" description="Significantly reduced binding to VCP." evidence="20">
    <original>R</original>
    <variation>A</variation>
    <location>
        <position position="247"/>
    </location>
</feature>
<feature type="mutagenesis site" description="Significantly reduced binding to VCP." evidence="20">
    <original>L</original>
    <variation>A</variation>
    <location>
        <position position="248"/>
    </location>
</feature>
<feature type="strand" evidence="34">
    <location>
        <begin position="245"/>
        <end position="247"/>
    </location>
</feature>
<keyword id="KW-0002">3D-structure</keyword>
<keyword id="KW-0007">Acetylation</keyword>
<keyword id="KW-0025">Alternative splicing</keyword>
<keyword id="KW-0256">Endoplasmic reticulum</keyword>
<keyword id="KW-0945">Host-virus interaction</keyword>
<keyword id="KW-0472">Membrane</keyword>
<keyword id="KW-0597">Phosphoprotein</keyword>
<keyword id="KW-0653">Protein transport</keyword>
<keyword id="KW-1267">Proteomics identification</keyword>
<keyword id="KW-1185">Reference proteome</keyword>
<keyword id="KW-0812">Transmembrane</keyword>
<keyword id="KW-1133">Transmembrane helix</keyword>
<keyword id="KW-0813">Transport</keyword>
<keyword id="KW-0834">Unfolded protein response</keyword>
<organism>
    <name type="scientific">Homo sapiens</name>
    <name type="common">Human</name>
    <dbReference type="NCBI Taxonomy" id="9606"/>
    <lineage>
        <taxon>Eukaryota</taxon>
        <taxon>Metazoa</taxon>
        <taxon>Chordata</taxon>
        <taxon>Craniata</taxon>
        <taxon>Vertebrata</taxon>
        <taxon>Euteleostomi</taxon>
        <taxon>Mammalia</taxon>
        <taxon>Eutheria</taxon>
        <taxon>Euarchontoglires</taxon>
        <taxon>Primates</taxon>
        <taxon>Haplorrhini</taxon>
        <taxon>Catarrhini</taxon>
        <taxon>Hominidae</taxon>
        <taxon>Homo</taxon>
    </lineage>
</organism>
<comment type="function">
    <text evidence="4 18 19 22">Functional component of endoplasmic reticulum-associated degradation (ERAD) for misfolded lumenal proteins (PubMed:15215856, PubMed:33658201). Forms homotetramers which encircle a large channel traversing the endoplasmic reticulum (ER) membrane (PubMed:33658201). This allows the retrotranslocation of misfolded proteins from the ER into the cytosol where they are ubiquitinated and degraded by the proteasome (PubMed:33658201). The channel has a lateral gate within the membrane which provides direct access to membrane proteins with no need to reenter the ER lumen first (PubMed:33658201). May mediate the interaction between VCP and the misfolded protein (PubMed:15215856). Also involved in endoplasmic reticulum stress-induced pre-emptive quality control, a mechanism that selectively attenuates the translocation of newly synthesized proteins into the endoplasmic reticulum and reroutes them to the cytosol for proteasomal degradation (PubMed:26565908). By controlling the steady-state expression of the IGF1R receptor, indirectly regulates the insulin-like growth factor receptor signaling pathway (PubMed:26692333).</text>
</comment>
<comment type="function">
    <text evidence="3 4">(Microbial infection) In case of infection by cytomegaloviruses, it plays a central role in the export from the ER and subsequent degradation of MHC class I heavy chains via its interaction with US11 viral protein, which recognizes and associates with MHC class I heavy chains. Also participates in the degradation process of misfolded cytomegalovirus US2 protein.</text>
</comment>
<comment type="subunit">
    <text evidence="1 4 5 6 7 8 9 10 11 12 13 14 15 16 17 18 20 21 22">Homotetramer (PubMed:33658201). The four subunits of the tetramer are arranged in a twofold symmetry (PubMed:33658201). Forms heterooligomers with DERL2 and DERL3; binding to DERL3 is poorer than that between DERL2 and DERL3. Interacts (via SHP-box motif) with VCP (PubMed:16186509, PubMed:16186510, PubMed:16289116, PubMed:16449189, PubMed:27714797). Interacts with AMFR, SELENOS, SEL1L, SELENOK and SYVN1, as well as with SEL1L-SYVN1 and VCP-SELENOS protein complexes; this interaction is weaker than that observed between DERL2 and these complexes. Interacts with NGLY1 and YOD1. Does not bind to EDEM1. Interacts with DNAJB9. Interacts with RNF103 (PubMed:15215856, PubMed:16055502, PubMed:16186509, PubMed:16186510, PubMed:16289116, PubMed:16449189, PubMed:18675248, PubMed:19818707, PubMed:22016385). Interacts with HM13 (PubMed:25239945). Interacts with XBP1 isoform 1 (via luminal/ectodomain domain); the interaction obviates the need for ectodomain shedding prior HM13/SPP-mediated XBP1 isoform 1 cleavage (PubMed:25239945). Interacts with the signal recognition particle/SRP and the SRP receptor; in the process of endoplasmic reticulum stress-induced pre-emptive quality control (PubMed:26565908). May interact with UBXN6 (PubMed:19275885). Interacts with ZFAND2B; probably through VCP (PubMed:24160817). Interacts with CCDC47 (By similarity). Interacts with C18orf32 (PubMed:29275994). May interact with TRAM1 (PubMed:19121997). Forms a complex with SVIP and VCP/p97 (PubMed:17872946).</text>
</comment>
<comment type="subunit">
    <text evidence="3 4">(Microbial infection) Interacts with the cytomegalovirus US11 protein.</text>
</comment>
<comment type="interaction">
    <interactant intactId="EBI-398977">
        <id>Q9BUN8</id>
    </interactant>
    <interactant intactId="EBI-7131019">
        <id>Q8TB40</id>
        <label>ABHD4</label>
    </interactant>
    <organismsDiffer>false</organismsDiffer>
    <experiments>3</experiments>
</comment>
<comment type="interaction">
    <interactant intactId="EBI-398977">
        <id>Q9BUN8</id>
    </interactant>
    <interactant intactId="EBI-13059134">
        <id>Q13520</id>
        <label>AQP6</label>
    </interactant>
    <organismsDiffer>false</organismsDiffer>
    <experiments>3</experiments>
</comment>
<comment type="interaction">
    <interactant intactId="EBI-398977">
        <id>Q9BUN8</id>
    </interactant>
    <interactant intactId="EBI-77683">
        <id>P51572</id>
        <label>BCAP31</label>
    </interactant>
    <organismsDiffer>false</organismsDiffer>
    <experiments>3</experiments>
</comment>
<comment type="interaction">
    <interactant intactId="EBI-398977">
        <id>Q9BUN8</id>
    </interactant>
    <interactant intactId="EBI-349854">
        <id>P13569</id>
        <label>CFTR</label>
    </interactant>
    <organismsDiffer>false</organismsDiffer>
    <experiments>8</experiments>
</comment>
<comment type="interaction">
    <interactant intactId="EBI-398977">
        <id>Q9BUN8</id>
    </interactant>
    <interactant intactId="EBI-752069">
        <id>Q9H5X1</id>
        <label>CIAO2A</label>
    </interactant>
    <organismsDiffer>false</organismsDiffer>
    <experiments>3</experiments>
</comment>
<comment type="interaction">
    <interactant intactId="EBI-398977">
        <id>Q9BUN8</id>
    </interactant>
    <interactant intactId="EBI-4314687">
        <id>Q96PJ5</id>
        <label>FCRL4</label>
    </interactant>
    <organismsDiffer>false</organismsDiffer>
    <experiments>3</experiments>
</comment>
<comment type="interaction">
    <interactant intactId="EBI-398977">
        <id>Q9BUN8</id>
    </interactant>
    <interactant intactId="EBI-2833872">
        <id>O15552</id>
        <label>FFAR2</label>
    </interactant>
    <organismsDiffer>false</organismsDiffer>
    <experiments>3</experiments>
</comment>
<comment type="interaction">
    <interactant intactId="EBI-398977">
        <id>Q9BUN8</id>
    </interactant>
    <interactant intactId="EBI-9304251">
        <id>Q05329</id>
        <label>GAD2</label>
    </interactant>
    <organismsDiffer>false</organismsDiffer>
    <experiments>3</experiments>
</comment>
<comment type="interaction">
    <interactant intactId="EBI-398977">
        <id>Q9BUN8</id>
    </interactant>
    <interactant intactId="EBI-347472">
        <id>Q8TCT9</id>
        <label>HM13</label>
    </interactant>
    <organismsDiffer>false</organismsDiffer>
    <experiments>6</experiments>
</comment>
<comment type="interaction">
    <interactant intactId="EBI-398977">
        <id>Q9BUN8</id>
    </interactant>
    <interactant intactId="EBI-749265">
        <id>Q8N6L0</id>
        <label>KASH5</label>
    </interactant>
    <organismsDiffer>false</organismsDiffer>
    <experiments>3</experiments>
</comment>
<comment type="interaction">
    <interactant intactId="EBI-398977">
        <id>Q9BUN8</id>
    </interactant>
    <interactant intactId="EBI-739832">
        <id>Q8TBB1</id>
        <label>LNX1</label>
    </interactant>
    <organismsDiffer>false</organismsDiffer>
    <experiments>3</experiments>
</comment>
<comment type="interaction">
    <interactant intactId="EBI-398977">
        <id>Q9BUN8</id>
    </interactant>
    <interactant intactId="EBI-7545592">
        <id>Q9H6H4</id>
        <label>REEP4</label>
    </interactant>
    <organismsDiffer>false</organismsDiffer>
    <experiments>3</experiments>
</comment>
<comment type="interaction">
    <interactant intactId="EBI-398977">
        <id>Q9BUN8</id>
    </interactant>
    <interactant intactId="EBI-10192441">
        <id>Q86VR2</id>
        <label>RETREG3</label>
    </interactant>
    <organismsDiffer>false</organismsDiffer>
    <experiments>3</experiments>
</comment>
<comment type="interaction">
    <interactant intactId="EBI-398977">
        <id>Q9BUN8</id>
    </interactant>
    <interactant intactId="EBI-17247926">
        <id>Q9NY72</id>
        <label>SCN3B</label>
    </interactant>
    <organismsDiffer>false</organismsDiffer>
    <experiments>3</experiments>
</comment>
<comment type="interaction">
    <interactant intactId="EBI-398977">
        <id>Q9BUN8</id>
    </interactant>
    <interactant intactId="EBI-3923031">
        <id>Q14973</id>
        <label>SLC10A1</label>
    </interactant>
    <organismsDiffer>false</organismsDiffer>
    <experiments>3</experiments>
</comment>
<comment type="interaction">
    <interactant intactId="EBI-398977">
        <id>Q9BUN8</id>
    </interactant>
    <interactant intactId="EBI-18159983">
        <id>Q3KNW5</id>
        <label>SLC10A6</label>
    </interactant>
    <organismsDiffer>false</organismsDiffer>
    <experiments>3</experiments>
</comment>
<comment type="interaction">
    <interactant intactId="EBI-398977">
        <id>Q9BUN8</id>
    </interactant>
    <interactant intactId="EBI-10262251">
        <id>Q8IWU4</id>
        <label>SLC30A8</label>
    </interactant>
    <organismsDiffer>false</organismsDiffer>
    <experiments>3</experiments>
</comment>
<comment type="interaction">
    <interactant intactId="EBI-398977">
        <id>Q9BUN8</id>
    </interactant>
    <interactant intactId="EBI-5235586">
        <id>Q8TBB6</id>
        <label>SLC7A14</label>
    </interactant>
    <organismsDiffer>false</organismsDiffer>
    <experiments>3</experiments>
</comment>
<comment type="interaction">
    <interactant intactId="EBI-398977">
        <id>Q9BUN8</id>
    </interactant>
    <interactant intactId="EBI-13292283">
        <id>Q9UHI5</id>
        <label>SLC7A8</label>
    </interactant>
    <organismsDiffer>false</organismsDiffer>
    <experiments>3</experiments>
</comment>
<comment type="interaction">
    <interactant intactId="EBI-398977">
        <id>Q9BUN8</id>
    </interactant>
    <interactant intactId="EBI-745182">
        <id>Q9BQ70</id>
        <label>TCF25</label>
    </interactant>
    <organismsDiffer>false</organismsDiffer>
    <experiments>3</experiments>
</comment>
<comment type="interaction">
    <interactant intactId="EBI-398977">
        <id>Q9BUN8</id>
    </interactant>
    <interactant intactId="EBI-10278496">
        <id>Q53QW1</id>
        <label>TEX44</label>
    </interactant>
    <organismsDiffer>false</organismsDiffer>
    <experiments>3</experiments>
</comment>
<comment type="interaction">
    <interactant intactId="EBI-398977">
        <id>Q9BUN8</id>
    </interactant>
    <interactant intactId="EBI-11603430">
        <id>Q6PL24</id>
        <label>TMED8</label>
    </interactant>
    <organismsDiffer>false</organismsDiffer>
    <experiments>3</experiments>
</comment>
<comment type="interaction">
    <interactant intactId="EBI-398977">
        <id>Q9BUN8</id>
    </interactant>
    <interactant intactId="EBI-6447886">
        <id>Q9Y320</id>
        <label>TMX2</label>
    </interactant>
    <organismsDiffer>false</organismsDiffer>
    <experiments>3</experiments>
</comment>
<comment type="interaction">
    <interactant intactId="EBI-398977">
        <id>Q9BUN8</id>
    </interactant>
    <interactant intactId="EBI-742790">
        <id>Q13049</id>
        <label>TRIM32</label>
    </interactant>
    <organismsDiffer>false</organismsDiffer>
    <experiments>3</experiments>
</comment>
<comment type="interaction">
    <interactant intactId="EBI-398977">
        <id>Q9BUN8</id>
    </interactant>
    <interactant intactId="EBI-988826">
        <id>Q9Y385</id>
        <label>UBE2J1</label>
    </interactant>
    <organismsDiffer>false</organismsDiffer>
    <experiments>3</experiments>
</comment>
<comment type="subcellular location">
    <subcellularLocation>
        <location evidence="3 4 6 9">Endoplasmic reticulum membrane</location>
        <topology evidence="3 4 6 9">Multi-pass membrane protein</topology>
    </subcellularLocation>
</comment>
<comment type="alternative products">
    <event type="alternative splicing"/>
    <isoform>
        <id>Q9BUN8-1</id>
        <name>1</name>
        <sequence type="displayed"/>
    </isoform>
    <isoform>
        <id>Q9BUN8-2</id>
        <name>2</name>
        <sequence type="described" ref="VSP_041329"/>
    </isoform>
</comment>
<comment type="tissue specificity">
    <text evidence="3 9">Ubiquitous.</text>
</comment>
<comment type="similarity">
    <text evidence="25">Belongs to the derlin family.</text>
</comment>
<dbReference type="EMBL" id="AY358818">
    <property type="protein sequence ID" value="AAQ89177.1"/>
    <property type="molecule type" value="mRNA"/>
</dbReference>
<dbReference type="EMBL" id="AC104316">
    <property type="status" value="NOT_ANNOTATED_CDS"/>
    <property type="molecule type" value="Genomic_DNA"/>
</dbReference>
<dbReference type="EMBL" id="BC002457">
    <property type="protein sequence ID" value="AAH02457.1"/>
    <property type="molecule type" value="mRNA"/>
</dbReference>
<dbReference type="EMBL" id="AK124086">
    <property type="protein sequence ID" value="BAG54003.1"/>
    <property type="molecule type" value="mRNA"/>
</dbReference>
<dbReference type="CCDS" id="CCDS47915.1">
    <molecule id="Q9BUN8-2"/>
</dbReference>
<dbReference type="CCDS" id="CCDS6337.1">
    <molecule id="Q9BUN8-1"/>
</dbReference>
<dbReference type="RefSeq" id="NP_001128143.1">
    <molecule id="Q9BUN8-2"/>
    <property type="nucleotide sequence ID" value="NM_001134671.3"/>
</dbReference>
<dbReference type="RefSeq" id="NP_077271.1">
    <molecule id="Q9BUN8-1"/>
    <property type="nucleotide sequence ID" value="NM_024295.6"/>
</dbReference>
<dbReference type="PDB" id="5GLF">
    <property type="method" value="X-ray"/>
    <property type="resolution" value="2.25 A"/>
    <property type="chains" value="B/D/F/H=239-250"/>
</dbReference>
<dbReference type="PDB" id="7CZB">
    <property type="method" value="EM"/>
    <property type="resolution" value="3.80 A"/>
    <property type="chains" value="A/B/C/D=1-251"/>
</dbReference>
<dbReference type="PDB" id="7Y4W">
    <property type="method" value="EM"/>
    <property type="resolution" value="3.67 A"/>
    <property type="chains" value="W/X/Y/Z=1-251"/>
</dbReference>
<dbReference type="PDB" id="7Y53">
    <property type="method" value="EM"/>
    <property type="resolution" value="3.61 A"/>
    <property type="chains" value="W/X/Y/Z=1-251"/>
</dbReference>
<dbReference type="PDB" id="7Y59">
    <property type="method" value="EM"/>
    <property type="resolution" value="4.51 A"/>
    <property type="chains" value="W/X/Y/Z=1-251"/>
</dbReference>
<dbReference type="PDBsum" id="5GLF"/>
<dbReference type="PDBsum" id="7CZB"/>
<dbReference type="PDBsum" id="7Y4W"/>
<dbReference type="PDBsum" id="7Y53"/>
<dbReference type="PDBsum" id="7Y59"/>
<dbReference type="EMDB" id="EMD-30508"/>
<dbReference type="EMDB" id="EMD-33608"/>
<dbReference type="EMDB" id="EMD-33611"/>
<dbReference type="EMDB" id="EMD-33613"/>
<dbReference type="SMR" id="Q9BUN8"/>
<dbReference type="BioGRID" id="122559">
    <property type="interactions" value="498"/>
</dbReference>
<dbReference type="ComplexPortal" id="CPX-8570">
    <property type="entry name" value="VCP-DERL1 AAA ATPase complex"/>
</dbReference>
<dbReference type="CORUM" id="Q9BUN8"/>
<dbReference type="FunCoup" id="Q9BUN8">
    <property type="interactions" value="1836"/>
</dbReference>
<dbReference type="IntAct" id="Q9BUN8">
    <property type="interactions" value="68"/>
</dbReference>
<dbReference type="MINT" id="Q9BUN8"/>
<dbReference type="STRING" id="9606.ENSP00000259512"/>
<dbReference type="TCDB" id="3.A.16.1.1">
    <property type="family name" value="the endoplasmic reticular retrotranslocon (er-rt) family"/>
</dbReference>
<dbReference type="iPTMnet" id="Q9BUN8"/>
<dbReference type="MetOSite" id="Q9BUN8"/>
<dbReference type="PhosphoSitePlus" id="Q9BUN8"/>
<dbReference type="SwissPalm" id="Q9BUN8"/>
<dbReference type="BioMuta" id="DERL1"/>
<dbReference type="DMDM" id="50400630"/>
<dbReference type="jPOST" id="Q9BUN8"/>
<dbReference type="MassIVE" id="Q9BUN8"/>
<dbReference type="PaxDb" id="9606-ENSP00000259512"/>
<dbReference type="PeptideAtlas" id="Q9BUN8"/>
<dbReference type="ProteomicsDB" id="79114">
    <molecule id="Q9BUN8-1"/>
</dbReference>
<dbReference type="ProteomicsDB" id="79115">
    <molecule id="Q9BUN8-2"/>
</dbReference>
<dbReference type="Pumba" id="Q9BUN8"/>
<dbReference type="TopDownProteomics" id="Q9BUN8-1">
    <molecule id="Q9BUN8-1"/>
</dbReference>
<dbReference type="Antibodypedia" id="13772">
    <property type="antibodies" value="240 antibodies from 28 providers"/>
</dbReference>
<dbReference type="DNASU" id="79139"/>
<dbReference type="Ensembl" id="ENST00000259512.9">
    <molecule id="Q9BUN8-1"/>
    <property type="protein sequence ID" value="ENSP00000259512.3"/>
    <property type="gene ID" value="ENSG00000136986.10"/>
</dbReference>
<dbReference type="Ensembl" id="ENST00000405944.7">
    <molecule id="Q9BUN8-2"/>
    <property type="protein sequence ID" value="ENSP00000384289.3"/>
    <property type="gene ID" value="ENSG00000136986.10"/>
</dbReference>
<dbReference type="GeneID" id="79139"/>
<dbReference type="KEGG" id="hsa:79139"/>
<dbReference type="MANE-Select" id="ENST00000259512.9">
    <property type="protein sequence ID" value="ENSP00000259512.3"/>
    <property type="RefSeq nucleotide sequence ID" value="NM_024295.6"/>
    <property type="RefSeq protein sequence ID" value="NP_077271.1"/>
</dbReference>
<dbReference type="UCSC" id="uc003ypl.3">
    <molecule id="Q9BUN8-1"/>
    <property type="organism name" value="human"/>
</dbReference>
<dbReference type="AGR" id="HGNC:28454"/>
<dbReference type="CTD" id="79139"/>
<dbReference type="DisGeNET" id="79139"/>
<dbReference type="GeneCards" id="DERL1"/>
<dbReference type="HGNC" id="HGNC:28454">
    <property type="gene designation" value="DERL1"/>
</dbReference>
<dbReference type="HPA" id="ENSG00000136986">
    <property type="expression patterns" value="Low tissue specificity"/>
</dbReference>
<dbReference type="MIM" id="608813">
    <property type="type" value="gene"/>
</dbReference>
<dbReference type="neXtProt" id="NX_Q9BUN8"/>
<dbReference type="OpenTargets" id="ENSG00000136986"/>
<dbReference type="PharmGKB" id="PA134926638"/>
<dbReference type="VEuPathDB" id="HostDB:ENSG00000136986"/>
<dbReference type="eggNOG" id="KOG0858">
    <property type="taxonomic scope" value="Eukaryota"/>
</dbReference>
<dbReference type="GeneTree" id="ENSGT00530000063156"/>
<dbReference type="InParanoid" id="Q9BUN8"/>
<dbReference type="OMA" id="LWRCVTS"/>
<dbReference type="OrthoDB" id="19102at2759"/>
<dbReference type="PAN-GO" id="Q9BUN8">
    <property type="GO annotations" value="6 GO annotations based on evolutionary models"/>
</dbReference>
<dbReference type="PhylomeDB" id="Q9BUN8"/>
<dbReference type="TreeFam" id="TF354297"/>
<dbReference type="BRENDA" id="3.4.21.105">
    <property type="organism ID" value="2681"/>
</dbReference>
<dbReference type="PathwayCommons" id="Q9BUN8"/>
<dbReference type="Reactome" id="R-HSA-382556">
    <property type="pathway name" value="ABC-family proteins mediated transport"/>
</dbReference>
<dbReference type="Reactome" id="R-HSA-532668">
    <property type="pathway name" value="N-glycan trimming in the ER and Calnexin/Calreticulin cycle"/>
</dbReference>
<dbReference type="Reactome" id="R-HSA-5678895">
    <property type="pathway name" value="Defective CFTR causes cystic fibrosis"/>
</dbReference>
<dbReference type="Reactome" id="R-HSA-8866654">
    <property type="pathway name" value="E3 ubiquitin ligases ubiquitinate target proteins"/>
</dbReference>
<dbReference type="SignaLink" id="Q9BUN8"/>
<dbReference type="SIGNOR" id="Q9BUN8"/>
<dbReference type="BioGRID-ORCS" id="79139">
    <property type="hits" value="57 hits in 1161 CRISPR screens"/>
</dbReference>
<dbReference type="ChiTaRS" id="DERL1">
    <property type="organism name" value="human"/>
</dbReference>
<dbReference type="GenomeRNAi" id="79139"/>
<dbReference type="Pharos" id="Q9BUN8">
    <property type="development level" value="Tbio"/>
</dbReference>
<dbReference type="PRO" id="PR:Q9BUN8"/>
<dbReference type="Proteomes" id="UP000005640">
    <property type="component" value="Chromosome 8"/>
</dbReference>
<dbReference type="RNAct" id="Q9BUN8">
    <property type="molecule type" value="protein"/>
</dbReference>
<dbReference type="Bgee" id="ENSG00000136986">
    <property type="expression patterns" value="Expressed in secondary oocyte and 204 other cell types or tissues"/>
</dbReference>
<dbReference type="ExpressionAtlas" id="Q9BUN8">
    <property type="expression patterns" value="baseline and differential"/>
</dbReference>
<dbReference type="GO" id="GO:0036513">
    <property type="term" value="C:Derlin-1 retrotranslocation complex"/>
    <property type="evidence" value="ECO:0000314"/>
    <property type="project" value="UniProtKB"/>
</dbReference>
<dbReference type="GO" id="GO:0036502">
    <property type="term" value="C:Derlin-1-VIMP complex"/>
    <property type="evidence" value="ECO:0000314"/>
    <property type="project" value="ParkinsonsUK-UCL"/>
</dbReference>
<dbReference type="GO" id="GO:0005769">
    <property type="term" value="C:early endosome"/>
    <property type="evidence" value="ECO:0007669"/>
    <property type="project" value="Ensembl"/>
</dbReference>
<dbReference type="GO" id="GO:0005783">
    <property type="term" value="C:endoplasmic reticulum"/>
    <property type="evidence" value="ECO:0000314"/>
    <property type="project" value="HPA"/>
</dbReference>
<dbReference type="GO" id="GO:0005789">
    <property type="term" value="C:endoplasmic reticulum membrane"/>
    <property type="evidence" value="ECO:0000314"/>
    <property type="project" value="UniProtKB"/>
</dbReference>
<dbReference type="GO" id="GO:0044322">
    <property type="term" value="C:endoplasmic reticulum quality control compartment"/>
    <property type="evidence" value="ECO:0007669"/>
    <property type="project" value="Ensembl"/>
</dbReference>
<dbReference type="GO" id="GO:0005770">
    <property type="term" value="C:late endosome"/>
    <property type="evidence" value="ECO:0007669"/>
    <property type="project" value="Ensembl"/>
</dbReference>
<dbReference type="GO" id="GO:0016020">
    <property type="term" value="C:membrane"/>
    <property type="evidence" value="ECO:0000314"/>
    <property type="project" value="MGI"/>
</dbReference>
<dbReference type="GO" id="GO:0051117">
    <property type="term" value="F:ATPase binding"/>
    <property type="evidence" value="ECO:0000353"/>
    <property type="project" value="UniProtKB"/>
</dbReference>
<dbReference type="GO" id="GO:0042802">
    <property type="term" value="F:identical protein binding"/>
    <property type="evidence" value="ECO:0000353"/>
    <property type="project" value="ParkinsonsUK-UCL"/>
</dbReference>
<dbReference type="GO" id="GO:0042288">
    <property type="term" value="F:MHC class I protein binding"/>
    <property type="evidence" value="ECO:0000314"/>
    <property type="project" value="UniProtKB"/>
</dbReference>
<dbReference type="GO" id="GO:0002020">
    <property type="term" value="F:protease binding"/>
    <property type="evidence" value="ECO:0000353"/>
    <property type="project" value="UniProtKB"/>
</dbReference>
<dbReference type="GO" id="GO:0044877">
    <property type="term" value="F:protein-containing complex binding"/>
    <property type="evidence" value="ECO:0000353"/>
    <property type="project" value="UniProtKB"/>
</dbReference>
<dbReference type="GO" id="GO:0005047">
    <property type="term" value="F:signal recognition particle binding"/>
    <property type="evidence" value="ECO:0000314"/>
    <property type="project" value="UniProtKB"/>
</dbReference>
<dbReference type="GO" id="GO:0038023">
    <property type="term" value="F:signaling receptor activity"/>
    <property type="evidence" value="ECO:0000303"/>
    <property type="project" value="UniProtKB"/>
</dbReference>
<dbReference type="GO" id="GO:0031625">
    <property type="term" value="F:ubiquitin protein ligase binding"/>
    <property type="evidence" value="ECO:0000353"/>
    <property type="project" value="ParkinsonsUK-UCL"/>
</dbReference>
<dbReference type="GO" id="GO:1990381">
    <property type="term" value="F:ubiquitin-specific protease binding"/>
    <property type="evidence" value="ECO:0000353"/>
    <property type="project" value="ParkinsonsUK-UCL"/>
</dbReference>
<dbReference type="GO" id="GO:0071218">
    <property type="term" value="P:cellular response to misfolded protein"/>
    <property type="evidence" value="ECO:0000315"/>
    <property type="project" value="ParkinsonsUK-UCL"/>
</dbReference>
<dbReference type="GO" id="GO:0030968">
    <property type="term" value="P:endoplasmic reticulum unfolded protein response"/>
    <property type="evidence" value="ECO:0000314"/>
    <property type="project" value="UniProtKB"/>
</dbReference>
<dbReference type="GO" id="GO:0036503">
    <property type="term" value="P:ERAD pathway"/>
    <property type="evidence" value="ECO:0000314"/>
    <property type="project" value="UniProtKB"/>
</dbReference>
<dbReference type="GO" id="GO:0045184">
    <property type="term" value="P:establishment of protein localization"/>
    <property type="evidence" value="ECO:0000304"/>
    <property type="project" value="UniProtKB"/>
</dbReference>
<dbReference type="GO" id="GO:0031398">
    <property type="term" value="P:positive regulation of protein ubiquitination"/>
    <property type="evidence" value="ECO:0000314"/>
    <property type="project" value="ParkinsonsUK-UCL"/>
</dbReference>
<dbReference type="GO" id="GO:0043161">
    <property type="term" value="P:proteasome-mediated ubiquitin-dependent protein catabolic process"/>
    <property type="evidence" value="ECO:0007669"/>
    <property type="project" value="Ensembl"/>
</dbReference>
<dbReference type="GO" id="GO:0031648">
    <property type="term" value="P:protein destabilization"/>
    <property type="evidence" value="ECO:0000315"/>
    <property type="project" value="UniProtKB"/>
</dbReference>
<dbReference type="GO" id="GO:0006986">
    <property type="term" value="P:response to unfolded protein"/>
    <property type="evidence" value="ECO:0000315"/>
    <property type="project" value="MGI"/>
</dbReference>
<dbReference type="GO" id="GO:0030970">
    <property type="term" value="P:retrograde protein transport, ER to cytosol"/>
    <property type="evidence" value="ECO:0000314"/>
    <property type="project" value="UniProtKB"/>
</dbReference>
<dbReference type="InterPro" id="IPR007599">
    <property type="entry name" value="DER1"/>
</dbReference>
<dbReference type="InterPro" id="IPR035952">
    <property type="entry name" value="Rhomboid-like_sf"/>
</dbReference>
<dbReference type="PANTHER" id="PTHR11009">
    <property type="entry name" value="DER1-LIKE PROTEIN, DERLIN"/>
    <property type="match status" value="1"/>
</dbReference>
<dbReference type="Pfam" id="PF04511">
    <property type="entry name" value="DER1"/>
    <property type="match status" value="1"/>
</dbReference>
<dbReference type="SUPFAM" id="SSF144091">
    <property type="entry name" value="Rhomboid-like"/>
    <property type="match status" value="1"/>
</dbReference>
<proteinExistence type="evidence at protein level"/>
<reference key="1">
    <citation type="journal article" date="2003" name="Genome Res.">
        <title>The secreted protein discovery initiative (SPDI), a large-scale effort to identify novel human secreted and transmembrane proteins: a bioinformatics assessment.</title>
        <authorList>
            <person name="Clark H.F."/>
            <person name="Gurney A.L."/>
            <person name="Abaya E."/>
            <person name="Baker K."/>
            <person name="Baldwin D.T."/>
            <person name="Brush J."/>
            <person name="Chen J."/>
            <person name="Chow B."/>
            <person name="Chui C."/>
            <person name="Crowley C."/>
            <person name="Currell B."/>
            <person name="Deuel B."/>
            <person name="Dowd P."/>
            <person name="Eaton D."/>
            <person name="Foster J.S."/>
            <person name="Grimaldi C."/>
            <person name="Gu Q."/>
            <person name="Hass P.E."/>
            <person name="Heldens S."/>
            <person name="Huang A."/>
            <person name="Kim H.S."/>
            <person name="Klimowski L."/>
            <person name="Jin Y."/>
            <person name="Johnson S."/>
            <person name="Lee J."/>
            <person name="Lewis L."/>
            <person name="Liao D."/>
            <person name="Mark M.R."/>
            <person name="Robbie E."/>
            <person name="Sanchez C."/>
            <person name="Schoenfeld J."/>
            <person name="Seshagiri S."/>
            <person name="Simmons L."/>
            <person name="Singh J."/>
            <person name="Smith V."/>
            <person name="Stinson J."/>
            <person name="Vagts A."/>
            <person name="Vandlen R.L."/>
            <person name="Watanabe C."/>
            <person name="Wieand D."/>
            <person name="Woods K."/>
            <person name="Xie M.-H."/>
            <person name="Yansura D.G."/>
            <person name="Yi S."/>
            <person name="Yu G."/>
            <person name="Yuan J."/>
            <person name="Zhang M."/>
            <person name="Zhang Z."/>
            <person name="Goddard A.D."/>
            <person name="Wood W.I."/>
            <person name="Godowski P.J."/>
            <person name="Gray A.M."/>
        </authorList>
    </citation>
    <scope>NUCLEOTIDE SEQUENCE [LARGE SCALE MRNA] (ISOFORM 1)</scope>
</reference>
<reference key="2">
    <citation type="journal article" date="2006" name="Nature">
        <title>DNA sequence and analysis of human chromosome 8.</title>
        <authorList>
            <person name="Nusbaum C."/>
            <person name="Mikkelsen T.S."/>
            <person name="Zody M.C."/>
            <person name="Asakawa S."/>
            <person name="Taudien S."/>
            <person name="Garber M."/>
            <person name="Kodira C.D."/>
            <person name="Schueler M.G."/>
            <person name="Shimizu A."/>
            <person name="Whittaker C.A."/>
            <person name="Chang J.L."/>
            <person name="Cuomo C.A."/>
            <person name="Dewar K."/>
            <person name="FitzGerald M.G."/>
            <person name="Yang X."/>
            <person name="Allen N.R."/>
            <person name="Anderson S."/>
            <person name="Asakawa T."/>
            <person name="Blechschmidt K."/>
            <person name="Bloom T."/>
            <person name="Borowsky M.L."/>
            <person name="Butler J."/>
            <person name="Cook A."/>
            <person name="Corum B."/>
            <person name="DeArellano K."/>
            <person name="DeCaprio D."/>
            <person name="Dooley K.T."/>
            <person name="Dorris L. III"/>
            <person name="Engels R."/>
            <person name="Gloeckner G."/>
            <person name="Hafez N."/>
            <person name="Hagopian D.S."/>
            <person name="Hall J.L."/>
            <person name="Ishikawa S.K."/>
            <person name="Jaffe D.B."/>
            <person name="Kamat A."/>
            <person name="Kudoh J."/>
            <person name="Lehmann R."/>
            <person name="Lokitsang T."/>
            <person name="Macdonald P."/>
            <person name="Major J.E."/>
            <person name="Matthews C.D."/>
            <person name="Mauceli E."/>
            <person name="Menzel U."/>
            <person name="Mihalev A.H."/>
            <person name="Minoshima S."/>
            <person name="Murayama Y."/>
            <person name="Naylor J.W."/>
            <person name="Nicol R."/>
            <person name="Nguyen C."/>
            <person name="O'Leary S.B."/>
            <person name="O'Neill K."/>
            <person name="Parker S.C.J."/>
            <person name="Polley A."/>
            <person name="Raymond C.K."/>
            <person name="Reichwald K."/>
            <person name="Rodriguez J."/>
            <person name="Sasaki T."/>
            <person name="Schilhabel M."/>
            <person name="Siddiqui R."/>
            <person name="Smith C.L."/>
            <person name="Sneddon T.P."/>
            <person name="Talamas J.A."/>
            <person name="Tenzin P."/>
            <person name="Topham K."/>
            <person name="Venkataraman V."/>
            <person name="Wen G."/>
            <person name="Yamazaki S."/>
            <person name="Young S.K."/>
            <person name="Zeng Q."/>
            <person name="Zimmer A.R."/>
            <person name="Rosenthal A."/>
            <person name="Birren B.W."/>
            <person name="Platzer M."/>
            <person name="Shimizu N."/>
            <person name="Lander E.S."/>
        </authorList>
    </citation>
    <scope>NUCLEOTIDE SEQUENCE [LARGE SCALE GENOMIC DNA]</scope>
</reference>
<reference key="3">
    <citation type="journal article" date="2004" name="Genome Res.">
        <title>The status, quality, and expansion of the NIH full-length cDNA project: the Mammalian Gene Collection (MGC).</title>
        <authorList>
            <consortium name="The MGC Project Team"/>
        </authorList>
    </citation>
    <scope>NUCLEOTIDE SEQUENCE [LARGE SCALE MRNA] (ISOFORM 1)</scope>
    <source>
        <tissue>Lymph</tissue>
    </source>
</reference>
<reference key="4">
    <citation type="journal article" date="2004" name="Nat. Genet.">
        <title>Complete sequencing and characterization of 21,243 full-length human cDNAs.</title>
        <authorList>
            <person name="Ota T."/>
            <person name="Suzuki Y."/>
            <person name="Nishikawa T."/>
            <person name="Otsuki T."/>
            <person name="Sugiyama T."/>
            <person name="Irie R."/>
            <person name="Wakamatsu A."/>
            <person name="Hayashi K."/>
            <person name="Sato H."/>
            <person name="Nagai K."/>
            <person name="Kimura K."/>
            <person name="Makita H."/>
            <person name="Sekine M."/>
            <person name="Obayashi M."/>
            <person name="Nishi T."/>
            <person name="Shibahara T."/>
            <person name="Tanaka T."/>
            <person name="Ishii S."/>
            <person name="Yamamoto J."/>
            <person name="Saito K."/>
            <person name="Kawai Y."/>
            <person name="Isono Y."/>
            <person name="Nakamura Y."/>
            <person name="Nagahari K."/>
            <person name="Murakami K."/>
            <person name="Yasuda T."/>
            <person name="Iwayanagi T."/>
            <person name="Wagatsuma M."/>
            <person name="Shiratori A."/>
            <person name="Sudo H."/>
            <person name="Hosoiri T."/>
            <person name="Kaku Y."/>
            <person name="Kodaira H."/>
            <person name="Kondo H."/>
            <person name="Sugawara M."/>
            <person name="Takahashi M."/>
            <person name="Kanda K."/>
            <person name="Yokoi T."/>
            <person name="Furuya T."/>
            <person name="Kikkawa E."/>
            <person name="Omura Y."/>
            <person name="Abe K."/>
            <person name="Kamihara K."/>
            <person name="Katsuta N."/>
            <person name="Sato K."/>
            <person name="Tanikawa M."/>
            <person name="Yamazaki M."/>
            <person name="Ninomiya K."/>
            <person name="Ishibashi T."/>
            <person name="Yamashita H."/>
            <person name="Murakawa K."/>
            <person name="Fujimori K."/>
            <person name="Tanai H."/>
            <person name="Kimata M."/>
            <person name="Watanabe M."/>
            <person name="Hiraoka S."/>
            <person name="Chiba Y."/>
            <person name="Ishida S."/>
            <person name="Ono Y."/>
            <person name="Takiguchi S."/>
            <person name="Watanabe S."/>
            <person name="Yosida M."/>
            <person name="Hotuta T."/>
            <person name="Kusano J."/>
            <person name="Kanehori K."/>
            <person name="Takahashi-Fujii A."/>
            <person name="Hara H."/>
            <person name="Tanase T.-O."/>
            <person name="Nomura Y."/>
            <person name="Togiya S."/>
            <person name="Komai F."/>
            <person name="Hara R."/>
            <person name="Takeuchi K."/>
            <person name="Arita M."/>
            <person name="Imose N."/>
            <person name="Musashino K."/>
            <person name="Yuuki H."/>
            <person name="Oshima A."/>
            <person name="Sasaki N."/>
            <person name="Aotsuka S."/>
            <person name="Yoshikawa Y."/>
            <person name="Matsunawa H."/>
            <person name="Ichihara T."/>
            <person name="Shiohata N."/>
            <person name="Sano S."/>
            <person name="Moriya S."/>
            <person name="Momiyama H."/>
            <person name="Satoh N."/>
            <person name="Takami S."/>
            <person name="Terashima Y."/>
            <person name="Suzuki O."/>
            <person name="Nakagawa S."/>
            <person name="Senoh A."/>
            <person name="Mizoguchi H."/>
            <person name="Goto Y."/>
            <person name="Shimizu F."/>
            <person name="Wakebe H."/>
            <person name="Hishigaki H."/>
            <person name="Watanabe T."/>
            <person name="Sugiyama A."/>
            <person name="Takemoto M."/>
            <person name="Kawakami B."/>
            <person name="Yamazaki M."/>
            <person name="Watanabe K."/>
            <person name="Kumagai A."/>
            <person name="Itakura S."/>
            <person name="Fukuzumi Y."/>
            <person name="Fujimori Y."/>
            <person name="Komiyama M."/>
            <person name="Tashiro H."/>
            <person name="Tanigami A."/>
            <person name="Fujiwara T."/>
            <person name="Ono T."/>
            <person name="Yamada K."/>
            <person name="Fujii Y."/>
            <person name="Ozaki K."/>
            <person name="Hirao M."/>
            <person name="Ohmori Y."/>
            <person name="Kawabata A."/>
            <person name="Hikiji T."/>
            <person name="Kobatake N."/>
            <person name="Inagaki H."/>
            <person name="Ikema Y."/>
            <person name="Okamoto S."/>
            <person name="Okitani R."/>
            <person name="Kawakami T."/>
            <person name="Noguchi S."/>
            <person name="Itoh T."/>
            <person name="Shigeta K."/>
            <person name="Senba T."/>
            <person name="Matsumura K."/>
            <person name="Nakajima Y."/>
            <person name="Mizuno T."/>
            <person name="Morinaga M."/>
            <person name="Sasaki M."/>
            <person name="Togashi T."/>
            <person name="Oyama M."/>
            <person name="Hata H."/>
            <person name="Watanabe M."/>
            <person name="Komatsu T."/>
            <person name="Mizushima-Sugano J."/>
            <person name="Satoh T."/>
            <person name="Shirai Y."/>
            <person name="Takahashi Y."/>
            <person name="Nakagawa K."/>
            <person name="Okumura K."/>
            <person name="Nagase T."/>
            <person name="Nomura N."/>
            <person name="Kikuchi H."/>
            <person name="Masuho Y."/>
            <person name="Yamashita R."/>
            <person name="Nakai K."/>
            <person name="Yada T."/>
            <person name="Nakamura Y."/>
            <person name="Ohara O."/>
            <person name="Isogai T."/>
            <person name="Sugano S."/>
        </authorList>
    </citation>
    <scope>NUCLEOTIDE SEQUENCE [LARGE SCALE MRNA] OF 47-131 (ISOFORM 2)</scope>
    <source>
        <tissue>Esophagus</tissue>
    </source>
</reference>
<reference key="5">
    <citation type="journal article" date="2004" name="Nature">
        <title>A membrane protein required for dislocation of misfolded proteins from the ER.</title>
        <authorList>
            <person name="Lilley B.N."/>
            <person name="Ploegh H.L."/>
        </authorList>
    </citation>
    <scope>IDENTIFICATION BY MASS SPECTROMETRY</scope>
    <scope>FUNCTION (MICROBIAL INFECTION)</scope>
    <scope>SUBCELLULAR LOCATION</scope>
    <scope>MEMBRANE TOPOLOGY</scope>
    <scope>TISSUE SPECIFICITY</scope>
    <scope>INTERACTION WITH US11 (MICROBIAL INFECTION)</scope>
</reference>
<reference key="6">
    <citation type="journal article" date="2004" name="Nature">
        <title>A membrane protein complex mediates retro-translocation from the ER lumen into the cytosol.</title>
        <authorList>
            <person name="Ye Y."/>
            <person name="Shibata Y."/>
            <person name="Yun C."/>
            <person name="Ron D."/>
            <person name="Rapoport T.A."/>
        </authorList>
    </citation>
    <scope>IDENTIFICATION BY MASS SPECTROMETRY</scope>
    <scope>FUNCTION</scope>
    <scope>SUBCELLULAR LOCATION</scope>
    <scope>INTERACTION WITH US11 AND SELENOS</scope>
</reference>
<reference key="7">
    <citation type="journal article" date="2005" name="J. Mol. Biol.">
        <title>The ubiquitin-domain protein HERP forms a complex with components of the endoplasmic reticulum associated degradation pathway.</title>
        <authorList>
            <person name="Schulze A."/>
            <person name="Standera S."/>
            <person name="Buerger E."/>
            <person name="Kikkert M."/>
            <person name="van Voorden S."/>
            <person name="Wiertz E."/>
            <person name="Koning F."/>
            <person name="Kloetzel P.-M."/>
            <person name="Seeger M."/>
        </authorList>
    </citation>
    <scope>INTERACTION WITH VCP AND SYVN1</scope>
</reference>
<reference key="8">
    <citation type="journal article" date="2005" name="Mol. Biol. Cell">
        <title>The retrotranslocation protein derlin-1 binds peptide:N-glycanase to the endoplasmic reticulum.</title>
        <authorList>
            <person name="Katiyar S."/>
            <person name="Joshi S."/>
            <person name="Lennarz W.J."/>
        </authorList>
    </citation>
    <scope>INTERACTION WITH NGLY1</scope>
</reference>
<reference key="9">
    <citation type="journal article" date="2005" name="Proc. Natl. Acad. Sci. U.S.A.">
        <title>Recruitment of the p97 ATPase and ubiquitin ligases to the site of retrotranslocation at the endoplasmic reticulum membrane.</title>
        <authorList>
            <person name="Ye Y."/>
            <person name="Shibata Y."/>
            <person name="Kikkert M."/>
            <person name="van Voorden S."/>
            <person name="Wiertz E."/>
            <person name="Rapoport T.A."/>
        </authorList>
    </citation>
    <scope>HOMOOLIGOMERIZATION</scope>
    <scope>INTERACTION WITH AMFR; SYVN1; VCP AND SELENOS</scope>
</reference>
<reference key="10">
    <citation type="journal article" date="2005" name="Proc. Natl. Acad. Sci. U.S.A.">
        <title>Multiprotein complexes that link dislocation, ubiquitination, and extraction of misfolded proteins from the endoplasmic reticulum membrane.</title>
        <authorList>
            <person name="Lilley B.N."/>
            <person name="Ploegh H.L."/>
        </authorList>
    </citation>
    <scope>SUBCELLULAR LOCATION</scope>
    <scope>OLIGOMERIZATION</scope>
    <scope>INTERACTION WITH SELENOS; VCP; SEL1L AND SYVN1</scope>
</reference>
<reference key="11">
    <citation type="journal article" date="2006" name="J. Cell Biol.">
        <title>Derlin-2 and Derlin-3 are regulated by the mammalian unfolded protein response and are required for ER-associated degradation.</title>
        <authorList>
            <person name="Oda Y."/>
            <person name="Okada T."/>
            <person name="Yoshida H."/>
            <person name="Kaufman R.J."/>
            <person name="Nagata K."/>
            <person name="Mori K."/>
        </authorList>
    </citation>
    <scope>SUBCELLULAR LOCATION</scope>
    <scope>TISSUE SPECIFICITY</scope>
    <scope>INTERACTION WITH DERL3 AND VCP</scope>
</reference>
<reference key="12">
    <citation type="journal article" date="2007" name="J. Biol. Chem.">
        <title>Identification of SVIP as an endogenous inhibitor of endoplasmic reticulum-associated degradation.</title>
        <authorList>
            <person name="Ballar P."/>
            <person name="Zhong Y."/>
            <person name="Nagahama M."/>
            <person name="Tagaya M."/>
            <person name="Shen Y."/>
            <person name="Fang S."/>
        </authorList>
    </citation>
    <scope>INTERACTION WITH SVIP AND VCP</scope>
</reference>
<reference key="13">
    <citation type="journal article" date="2008" name="Biochem. Biophys. Res. Commun.">
        <title>Ubiquitin ligase Kf-1 is involved in the endoplasmic reticulum-associated degradation pathway.</title>
        <authorList>
            <person name="Maruyama Y."/>
            <person name="Yamada M."/>
            <person name="Takahashi K."/>
            <person name="Yamada M."/>
        </authorList>
    </citation>
    <scope>INTERACTION WITH RNF103</scope>
</reference>
<reference key="14">
    <citation type="journal article" date="2008" name="Proc. Natl. Acad. Sci. U.S.A.">
        <title>A quantitative atlas of mitotic phosphorylation.</title>
        <authorList>
            <person name="Dephoure N."/>
            <person name="Zhou C."/>
            <person name="Villen J."/>
            <person name="Beausoleil S.A."/>
            <person name="Bakalarski C.E."/>
            <person name="Elledge S.J."/>
            <person name="Gygi S.P."/>
        </authorList>
    </citation>
    <scope>PHOSPHORYLATION [LARGE SCALE ANALYSIS] AT THR-202</scope>
    <scope>IDENTIFICATION BY MASS SPECTROMETRY [LARGE SCALE ANALYSIS]</scope>
    <source>
        <tissue>Cervix carcinoma</tissue>
    </source>
</reference>
<reference key="15">
    <citation type="journal article" date="2009" name="Biochem. Biophys. Res. Commun.">
        <title>UBXD1 is a VCP-interacting protein that is involved in ER-associated degradation.</title>
        <authorList>
            <person name="Nagahama M."/>
            <person name="Ohnishi M."/>
            <person name="Kawate Y."/>
            <person name="Matsui T."/>
            <person name="Miyake H."/>
            <person name="Yuasa K."/>
            <person name="Tani K."/>
            <person name="Tagaya M."/>
            <person name="Tsuji A."/>
        </authorList>
    </citation>
    <scope>INTERACTION WITH UBXN6</scope>
</reference>
<reference key="16">
    <citation type="journal article" date="2009" name="J. Biol. Chem.">
        <title>TRAM1 participates in human cytomegalovirus US2- and US11-mediated dislocation of an endoplasmic reticulum membrane glycoprotein.</title>
        <authorList>
            <person name="Oresic K."/>
            <person name="Ng C.L."/>
            <person name="Tortorella D."/>
        </authorList>
    </citation>
    <scope>INTERACTION WITH TRAM1</scope>
</reference>
<reference key="17">
    <citation type="journal article" date="2009" name="Mol. Cell">
        <title>The otubain YOD1 is a deubiquitinating enzyme that associates with p97 to facilitate protein dislocation from the ER.</title>
        <authorList>
            <person name="Ernst R."/>
            <person name="Mueller B."/>
            <person name="Ploegh H.L."/>
            <person name="Schlieker C."/>
        </authorList>
    </citation>
    <scope>INTERACTION WITH YOD1</scope>
</reference>
<reference key="18">
    <citation type="journal article" date="2011" name="BMC Syst. Biol.">
        <title>Initial characterization of the human central proteome.</title>
        <authorList>
            <person name="Burkard T.R."/>
            <person name="Planyavsky M."/>
            <person name="Kaupe I."/>
            <person name="Breitwieser F.P."/>
            <person name="Buerckstuemmer T."/>
            <person name="Bennett K.L."/>
            <person name="Superti-Furga G."/>
            <person name="Colinge J."/>
        </authorList>
    </citation>
    <scope>IDENTIFICATION BY MASS SPECTROMETRY [LARGE SCALE ANALYSIS]</scope>
</reference>
<reference key="19">
    <citation type="journal article" date="2011" name="J. Biol. Chem.">
        <title>Selenoprotein K binds multiprotein complexes and is involved in the regulation of endoplasmic reticulum homeostasis.</title>
        <authorList>
            <person name="Shchedrina V.A."/>
            <person name="Everley R.A."/>
            <person name="Zhang Y."/>
            <person name="Gygi S.P."/>
            <person name="Hatfield D.L."/>
            <person name="Gladyshev V.N."/>
        </authorList>
    </citation>
    <scope>INTERACTION WITH SELENOK AND SELENOS</scope>
</reference>
<reference key="20">
    <citation type="journal article" date="2012" name="Mol. Cell. Proteomics">
        <title>Comparative large-scale characterisation of plant vs. mammal proteins reveals similar and idiosyncratic N-alpha acetylation features.</title>
        <authorList>
            <person name="Bienvenut W.V."/>
            <person name="Sumpton D."/>
            <person name="Martinez A."/>
            <person name="Lilla S."/>
            <person name="Espagne C."/>
            <person name="Meinnel T."/>
            <person name="Giglione C."/>
        </authorList>
    </citation>
    <scope>ACETYLATION [LARGE SCALE ANALYSIS] AT SER-2</scope>
    <scope>CLEAVAGE OF INITIATOR METHIONINE [LARGE SCALE ANALYSIS]</scope>
    <scope>IDENTIFICATION BY MASS SPECTROMETRY [LARGE SCALE ANALYSIS]</scope>
</reference>
<reference key="21">
    <citation type="journal article" date="2013" name="J. Proteome Res.">
        <title>Toward a comprehensive characterization of a human cancer cell phosphoproteome.</title>
        <authorList>
            <person name="Zhou H."/>
            <person name="Di Palma S."/>
            <person name="Preisinger C."/>
            <person name="Peng M."/>
            <person name="Polat A.N."/>
            <person name="Heck A.J."/>
            <person name="Mohammed S."/>
        </authorList>
    </citation>
    <scope>PHOSPHORYLATION [LARGE SCALE ANALYSIS] AT SER-201 AND SER-226</scope>
    <scope>IDENTIFICATION BY MASS SPECTROMETRY [LARGE SCALE ANALYSIS]</scope>
    <source>
        <tissue>Erythroleukemia</tissue>
    </source>
</reference>
<reference key="22">
    <citation type="journal article" date="2014" name="Biochem. J.">
        <title>Signal-peptide-mediated translocation is regulated by a p97-AIRAPL complex.</title>
        <authorList>
            <person name="Glinka T."/>
            <person name="Alter J."/>
            <person name="Braunstein I."/>
            <person name="Tzach L."/>
            <person name="Wei Sheng C."/>
            <person name="Geifman S."/>
            <person name="Edelmann M.J."/>
            <person name="Kessler B.M."/>
            <person name="Stanhill A."/>
        </authorList>
    </citation>
    <scope>INTERACTION WITH ZFAND2B</scope>
</reference>
<reference key="23">
    <citation type="journal article" date="2014" name="EMBO J.">
        <title>Signal peptide peptidase functions in ERAD to cleave the unfolded protein response regulator XBP1u.</title>
        <authorList>
            <person name="Chen C.Y."/>
            <person name="Malchus N.S."/>
            <person name="Hehn B."/>
            <person name="Stelzer W."/>
            <person name="Avci D."/>
            <person name="Langosch D."/>
            <person name="Lemberg M.K."/>
        </authorList>
    </citation>
    <scope>INTERACTION WITH HM13 AND XBP1</scope>
    <scope>MUTAGENESIS OF GLY-180</scope>
</reference>
<reference key="24">
    <citation type="journal article" date="2015" name="Cell Rep.">
        <title>Pre-emptive quality control protects the ER from protein overload via the proximity of ERAD components and SRP.</title>
        <authorList>
            <person name="Kadowaki H."/>
            <person name="Nagai A."/>
            <person name="Maruyama T."/>
            <person name="Takami Y."/>
            <person name="Satrimafitrah P."/>
            <person name="Kato H."/>
            <person name="Honda A."/>
            <person name="Hatta T."/>
            <person name="Natsume T."/>
            <person name="Sato T."/>
            <person name="Kai H."/>
            <person name="Ichijo H."/>
            <person name="Nishitoh H."/>
        </authorList>
    </citation>
    <scope>FUNCTION</scope>
    <scope>SUBUNIT</scope>
</reference>
<reference key="25">
    <citation type="journal article" date="2015" name="Proteomics">
        <title>N-terminome analysis of the human mitochondrial proteome.</title>
        <authorList>
            <person name="Vaca Jacome A.S."/>
            <person name="Rabilloud T."/>
            <person name="Schaeffer-Reiss C."/>
            <person name="Rompais M."/>
            <person name="Ayoub D."/>
            <person name="Lane L."/>
            <person name="Bairoch A."/>
            <person name="Van Dorsselaer A."/>
            <person name="Carapito C."/>
        </authorList>
    </citation>
    <scope>IDENTIFICATION BY MASS SPECTROMETRY [LARGE SCALE ANALYSIS]</scope>
</reference>
<reference key="26">
    <citation type="journal article" date="2016" name="Nat. Med.">
        <title>Loss of the proteostasis factor AIRAPL causes myeloid transformation by deregulating IGF-1 signaling.</title>
        <authorList>
            <person name="Osorio F.G."/>
            <person name="Soria-Valles C."/>
            <person name="Santiago-Fernandez O."/>
            <person name="Bernal T."/>
            <person name="Mittelbrunn M."/>
            <person name="Colado E."/>
            <person name="Rodriguez F."/>
            <person name="Bonzon-Kulichenko E."/>
            <person name="Vazquez J."/>
            <person name="Porta-de-la-Riva M."/>
            <person name="Ceron J."/>
            <person name="Fueyo A."/>
            <person name="Li J."/>
            <person name="Green A.R."/>
            <person name="Freije J.M."/>
            <person name="Lopez-Otin C."/>
        </authorList>
    </citation>
    <scope>FUNCTION</scope>
</reference>
<reference key="27">
    <citation type="journal article" date="2018" name="Dev. Cell">
        <title>A Proximity Labeling Strategy Provides Insights into the Composition and Dynamics of Lipid Droplet Proteomes.</title>
        <authorList>
            <person name="Bersuker K."/>
            <person name="Peterson C.W.H."/>
            <person name="To M."/>
            <person name="Sahl S.J."/>
            <person name="Savikhin V."/>
            <person name="Grossman E.A."/>
            <person name="Nomura D.K."/>
            <person name="Olzmann J.A."/>
        </authorList>
    </citation>
    <scope>INTERACTION WITH C18ORF32</scope>
</reference>
<reference evidence="29" key="28">
    <citation type="journal article" date="2016" name="FEBS Lett.">
        <title>Structural insights into the interaction of human p97 N-terminal domain and SHP motif in Derlin-1 rhomboid pseudoprotease.</title>
        <authorList>
            <person name="Lim J.J."/>
            <person name="Lee Y."/>
            <person name="Yoon S.Y."/>
            <person name="Ly T.T."/>
            <person name="Kang J.Y."/>
            <person name="Youn H.S."/>
            <person name="An J.Y."/>
            <person name="Lee J.G."/>
            <person name="Park K.R."/>
            <person name="Kim T.G."/>
            <person name="Yang J.K."/>
            <person name="Jun Y."/>
            <person name="Eom S.H."/>
        </authorList>
    </citation>
    <scope>X-RAY CRYSTALLOGRAPHY (2.25 ANGSTROMS) OF 239-250 IN COMPLEX WITH VCP</scope>
    <scope>INTERACTION WITH VCP</scope>
    <scope>SHP MOTIF</scope>
    <scope>MUTAGENESIS OF 243-GLY--GLY-245; ARG-247 AND LEU-248</scope>
</reference>
<reference evidence="30" key="29">
    <citation type="journal article" date="2021" name="Sci. Adv.">
        <title>The cryo-EM structure of an ERAD protein channel formed by tetrameric human Derlin-1.</title>
        <authorList>
            <person name="Rao B."/>
            <person name="Li S."/>
            <person name="Yao D."/>
            <person name="Wang Q."/>
            <person name="Xia Y."/>
            <person name="Jia Y."/>
            <person name="Shen Y."/>
            <person name="Cao Y."/>
        </authorList>
    </citation>
    <scope>STRUCTURE BY ELECTRON MICROSCOPY (3.8 ANGSTROMS)</scope>
    <scope>FUNCTION</scope>
    <scope>SUBUNIT</scope>
    <scope>TRANSMEMBRANE DOMAINS</scope>
    <scope>MUTAGENESIS OF PHE-70; LEU-73; TYR-164 AND ILE-165</scope>
</reference>
<accession>Q9BUN8</accession>
<accession>B3KW41</accession>
<accession>E9PH19</accession>
<sequence>MSDIGDWFRSIPAITRYWFAATVAVPLVGKLGLISPAYLFLWPEAFLYRFQIWRPITATFYFPVGPGTGFLYLVNLYFLYQYSTRLETGAFDGRPADYLFMLLFNWICIVITGLAMDMQLLMIPLIMSVLYVWAQLNRDMIVSFWFGTRFKACYLPWVILGFNYIIGGSVINELIGNLVGHLYFFLMFRYPMDLGGRNFLSTPQFLYRWLPSRRGGVSGFGVPPASMRRAADQNGGGGRHNWGQGFRLGDQ</sequence>
<evidence type="ECO:0000250" key="1">
    <source>
        <dbReference type="UniProtKB" id="Q99J56"/>
    </source>
</evidence>
<evidence type="ECO:0000256" key="2">
    <source>
        <dbReference type="SAM" id="MobiDB-lite"/>
    </source>
</evidence>
<evidence type="ECO:0000269" key="3">
    <source>
    </source>
</evidence>
<evidence type="ECO:0000269" key="4">
    <source>
    </source>
</evidence>
<evidence type="ECO:0000269" key="5">
    <source>
    </source>
</evidence>
<evidence type="ECO:0000269" key="6">
    <source>
    </source>
</evidence>
<evidence type="ECO:0000269" key="7">
    <source>
    </source>
</evidence>
<evidence type="ECO:0000269" key="8">
    <source>
    </source>
</evidence>
<evidence type="ECO:0000269" key="9">
    <source>
    </source>
</evidence>
<evidence type="ECO:0000269" key="10">
    <source>
    </source>
</evidence>
<evidence type="ECO:0000269" key="11">
    <source>
    </source>
</evidence>
<evidence type="ECO:0000269" key="12">
    <source>
    </source>
</evidence>
<evidence type="ECO:0000269" key="13">
    <source>
    </source>
</evidence>
<evidence type="ECO:0000269" key="14">
    <source>
    </source>
</evidence>
<evidence type="ECO:0000269" key="15">
    <source>
    </source>
</evidence>
<evidence type="ECO:0000269" key="16">
    <source>
    </source>
</evidence>
<evidence type="ECO:0000269" key="17">
    <source>
    </source>
</evidence>
<evidence type="ECO:0000269" key="18">
    <source>
    </source>
</evidence>
<evidence type="ECO:0000269" key="19">
    <source>
    </source>
</evidence>
<evidence type="ECO:0000269" key="20">
    <source>
    </source>
</evidence>
<evidence type="ECO:0000269" key="21">
    <source>
    </source>
</evidence>
<evidence type="ECO:0000269" key="22">
    <source>
    </source>
</evidence>
<evidence type="ECO:0000303" key="23">
    <source>
    </source>
</evidence>
<evidence type="ECO:0000303" key="24">
    <source>
    </source>
</evidence>
<evidence type="ECO:0000305" key="25"/>
<evidence type="ECO:0000305" key="26">
    <source>
    </source>
</evidence>
<evidence type="ECO:0000312" key="27">
    <source>
        <dbReference type="EMBL" id="AAQ89177.1"/>
    </source>
</evidence>
<evidence type="ECO:0000312" key="28">
    <source>
        <dbReference type="HGNC" id="HGNC:28454"/>
    </source>
</evidence>
<evidence type="ECO:0007744" key="29">
    <source>
        <dbReference type="PDB" id="5GLF"/>
    </source>
</evidence>
<evidence type="ECO:0007744" key="30">
    <source>
        <dbReference type="PDB" id="7CZB"/>
    </source>
</evidence>
<evidence type="ECO:0007744" key="31">
    <source>
    </source>
</evidence>
<evidence type="ECO:0007744" key="32">
    <source>
    </source>
</evidence>
<evidence type="ECO:0007744" key="33">
    <source>
    </source>
</evidence>
<evidence type="ECO:0007829" key="34">
    <source>
        <dbReference type="PDB" id="5GLF"/>
    </source>
</evidence>
<gene>
    <name evidence="28" type="primary">DERL1</name>
    <name type="synonym">DER1</name>
    <name evidence="27" type="ORF">UNQ243/PRO276</name>
</gene>
<protein>
    <recommendedName>
        <fullName evidence="24">Derlin-1</fullName>
    </recommendedName>
    <alternativeName>
        <fullName>Degradation in endoplasmic reticulum protein 1</fullName>
        <shortName>DERtrin-1</shortName>
    </alternativeName>
    <alternativeName>
        <fullName evidence="24">Der1-like protein 1</fullName>
    </alternativeName>
</protein>
<name>DERL1_HUMAN</name>